<comment type="catalytic activity">
    <reaction evidence="1">
        <text>(2R)-3-phosphoglycerate + ATP = (2R)-3-phospho-glyceroyl phosphate + ADP</text>
        <dbReference type="Rhea" id="RHEA:14801"/>
        <dbReference type="ChEBI" id="CHEBI:30616"/>
        <dbReference type="ChEBI" id="CHEBI:57604"/>
        <dbReference type="ChEBI" id="CHEBI:58272"/>
        <dbReference type="ChEBI" id="CHEBI:456216"/>
        <dbReference type="EC" id="2.7.2.3"/>
    </reaction>
</comment>
<comment type="pathway">
    <text evidence="1">Carbohydrate degradation; glycolysis; pyruvate from D-glyceraldehyde 3-phosphate: step 2/5.</text>
</comment>
<comment type="subunit">
    <text evidence="1">Monomer.</text>
</comment>
<comment type="subcellular location">
    <subcellularLocation>
        <location evidence="1">Cytoplasm</location>
    </subcellularLocation>
</comment>
<comment type="similarity">
    <text evidence="1">Belongs to the phosphoglycerate kinase family.</text>
</comment>
<sequence>MAKLIVSDVDVKDKKVLVRVDFNVPIKDGVIGDDNRIVAALPTIKYIIENGGKAILLSHLGRIKSDEDKKSLSLAPVAKRLGELLEKPVTFVPSNEGKEVEDAINNMKDGDVVVLENTRFQDIDNDFGKRESKNDPKLGEYWASLGDVFVNDAFGTAHRSHASNVGIATAMKAAGKPVAAGFLLEKEIKFLGNAVANPVHPFVTILGGAKVSDKIGVITNLIPKADHIIIGGGMAYTFLKAQGHNIGKSLVEDDKVEFAKELLEKAGDKLVLPIDHVAATEFNNDAASEVVGQDIPDNEMGLDIGPKTIELFKKTLEGAKTVVWNGPMGVFEMPNFAKGTLEVGRALADLPDATTIVGGGDSTAAAKQLGIAPKLTHISTGGGASLEYLEGKELPGIACVSDK</sequence>
<feature type="chain" id="PRO_0000145953" description="Phosphoglycerate kinase">
    <location>
        <begin position="1"/>
        <end position="403"/>
    </location>
</feature>
<feature type="binding site" evidence="1">
    <location>
        <begin position="21"/>
        <end position="23"/>
    </location>
    <ligand>
        <name>substrate</name>
    </ligand>
</feature>
<feature type="binding site" evidence="1">
    <location>
        <position position="36"/>
    </location>
    <ligand>
        <name>substrate</name>
    </ligand>
</feature>
<feature type="binding site" evidence="1">
    <location>
        <begin position="59"/>
        <end position="62"/>
    </location>
    <ligand>
        <name>substrate</name>
    </ligand>
</feature>
<feature type="binding site" evidence="1">
    <location>
        <position position="119"/>
    </location>
    <ligand>
        <name>substrate</name>
    </ligand>
</feature>
<feature type="binding site" evidence="1">
    <location>
        <position position="159"/>
    </location>
    <ligand>
        <name>substrate</name>
    </ligand>
</feature>
<feature type="binding site" evidence="1">
    <location>
        <position position="214"/>
    </location>
    <ligand>
        <name>ATP</name>
        <dbReference type="ChEBI" id="CHEBI:30616"/>
    </ligand>
</feature>
<feature type="binding site" evidence="1">
    <location>
        <position position="301"/>
    </location>
    <ligand>
        <name>ATP</name>
        <dbReference type="ChEBI" id="CHEBI:30616"/>
    </ligand>
</feature>
<feature type="binding site" evidence="1">
    <location>
        <position position="332"/>
    </location>
    <ligand>
        <name>ATP</name>
        <dbReference type="ChEBI" id="CHEBI:30616"/>
    </ligand>
</feature>
<feature type="binding site" evidence="1">
    <location>
        <begin position="359"/>
        <end position="362"/>
    </location>
    <ligand>
        <name>ATP</name>
        <dbReference type="ChEBI" id="CHEBI:30616"/>
    </ligand>
</feature>
<organism>
    <name type="scientific">Lactobacillus delbrueckii subsp. lactis</name>
    <dbReference type="NCBI Taxonomy" id="29397"/>
    <lineage>
        <taxon>Bacteria</taxon>
        <taxon>Bacillati</taxon>
        <taxon>Bacillota</taxon>
        <taxon>Bacilli</taxon>
        <taxon>Lactobacillales</taxon>
        <taxon>Lactobacillaceae</taxon>
        <taxon>Lactobacillus</taxon>
    </lineage>
</organism>
<name>PGK_LACDL</name>
<keyword id="KW-0067">ATP-binding</keyword>
<keyword id="KW-0963">Cytoplasm</keyword>
<keyword id="KW-0324">Glycolysis</keyword>
<keyword id="KW-0418">Kinase</keyword>
<keyword id="KW-0547">Nucleotide-binding</keyword>
<keyword id="KW-0808">Transferase</keyword>
<gene>
    <name evidence="1" type="primary">pgk</name>
</gene>
<proteinExistence type="inferred from homology"/>
<evidence type="ECO:0000255" key="1">
    <source>
        <dbReference type="HAMAP-Rule" id="MF_00145"/>
    </source>
</evidence>
<protein>
    <recommendedName>
        <fullName evidence="1">Phosphoglycerate kinase</fullName>
        <ecNumber evidence="1">2.7.2.3</ecNumber>
    </recommendedName>
</protein>
<accession>Q8GIZ5</accession>
<reference key="1">
    <citation type="journal article" date="2002" name="Int. Dairy J.">
        <title>Purification and characterization of the 3-phosphoglycerate kinase from the thermophile Lactobacillus delbrueckii subsp. lactis.</title>
        <authorList>
            <person name="Bourniquel A.A."/>
            <person name="Mollet B."/>
        </authorList>
        <dbReference type="AGRICOLA" id="IND23336280"/>
    </citation>
    <scope>NUCLEOTIDE SEQUENCE [GENOMIC DNA]</scope>
    <source>
        <strain>NCC 88</strain>
    </source>
</reference>
<dbReference type="EC" id="2.7.2.3" evidence="1"/>
<dbReference type="EMBL" id="AJ515554">
    <property type="protein sequence ID" value="CAD56495.1"/>
    <property type="molecule type" value="Genomic_DNA"/>
</dbReference>
<dbReference type="RefSeq" id="WP_138463503.1">
    <property type="nucleotide sequence ID" value="NZ_CP145818.1"/>
</dbReference>
<dbReference type="SMR" id="Q8GIZ5"/>
<dbReference type="UniPathway" id="UPA00109">
    <property type="reaction ID" value="UER00185"/>
</dbReference>
<dbReference type="GO" id="GO:0005829">
    <property type="term" value="C:cytosol"/>
    <property type="evidence" value="ECO:0007669"/>
    <property type="project" value="TreeGrafter"/>
</dbReference>
<dbReference type="GO" id="GO:0043531">
    <property type="term" value="F:ADP binding"/>
    <property type="evidence" value="ECO:0007669"/>
    <property type="project" value="TreeGrafter"/>
</dbReference>
<dbReference type="GO" id="GO:0005524">
    <property type="term" value="F:ATP binding"/>
    <property type="evidence" value="ECO:0007669"/>
    <property type="project" value="UniProtKB-KW"/>
</dbReference>
<dbReference type="GO" id="GO:0004618">
    <property type="term" value="F:phosphoglycerate kinase activity"/>
    <property type="evidence" value="ECO:0007669"/>
    <property type="project" value="UniProtKB-UniRule"/>
</dbReference>
<dbReference type="GO" id="GO:0006094">
    <property type="term" value="P:gluconeogenesis"/>
    <property type="evidence" value="ECO:0007669"/>
    <property type="project" value="TreeGrafter"/>
</dbReference>
<dbReference type="GO" id="GO:0006096">
    <property type="term" value="P:glycolytic process"/>
    <property type="evidence" value="ECO:0007669"/>
    <property type="project" value="UniProtKB-UniRule"/>
</dbReference>
<dbReference type="CDD" id="cd00318">
    <property type="entry name" value="Phosphoglycerate_kinase"/>
    <property type="match status" value="1"/>
</dbReference>
<dbReference type="FunFam" id="3.40.50.1260:FF:000001">
    <property type="entry name" value="Phosphoglycerate kinase"/>
    <property type="match status" value="1"/>
</dbReference>
<dbReference type="FunFam" id="3.40.50.1260:FF:000008">
    <property type="entry name" value="Phosphoglycerate kinase"/>
    <property type="match status" value="1"/>
</dbReference>
<dbReference type="Gene3D" id="3.40.50.1260">
    <property type="entry name" value="Phosphoglycerate kinase, N-terminal domain"/>
    <property type="match status" value="2"/>
</dbReference>
<dbReference type="HAMAP" id="MF_00145">
    <property type="entry name" value="Phosphoglyc_kinase"/>
    <property type="match status" value="1"/>
</dbReference>
<dbReference type="InterPro" id="IPR001576">
    <property type="entry name" value="Phosphoglycerate_kinase"/>
</dbReference>
<dbReference type="InterPro" id="IPR015911">
    <property type="entry name" value="Phosphoglycerate_kinase_CS"/>
</dbReference>
<dbReference type="InterPro" id="IPR015824">
    <property type="entry name" value="Phosphoglycerate_kinase_N"/>
</dbReference>
<dbReference type="InterPro" id="IPR036043">
    <property type="entry name" value="Phosphoglycerate_kinase_sf"/>
</dbReference>
<dbReference type="PANTHER" id="PTHR11406">
    <property type="entry name" value="PHOSPHOGLYCERATE KINASE"/>
    <property type="match status" value="1"/>
</dbReference>
<dbReference type="PANTHER" id="PTHR11406:SF23">
    <property type="entry name" value="PHOSPHOGLYCERATE KINASE 1, CHLOROPLASTIC-RELATED"/>
    <property type="match status" value="1"/>
</dbReference>
<dbReference type="Pfam" id="PF00162">
    <property type="entry name" value="PGK"/>
    <property type="match status" value="1"/>
</dbReference>
<dbReference type="PIRSF" id="PIRSF000724">
    <property type="entry name" value="Pgk"/>
    <property type="match status" value="1"/>
</dbReference>
<dbReference type="PRINTS" id="PR00477">
    <property type="entry name" value="PHGLYCKINASE"/>
</dbReference>
<dbReference type="SUPFAM" id="SSF53748">
    <property type="entry name" value="Phosphoglycerate kinase"/>
    <property type="match status" value="1"/>
</dbReference>
<dbReference type="PROSITE" id="PS00111">
    <property type="entry name" value="PGLYCERATE_KINASE"/>
    <property type="match status" value="1"/>
</dbReference>